<organismHost>
    <name type="scientific">Homo sapiens</name>
    <name type="common">Human</name>
    <dbReference type="NCBI Taxonomy" id="9606"/>
</organismHost>
<evidence type="ECO:0000255" key="1">
    <source>
        <dbReference type="HAMAP-Rule" id="MF_04079"/>
    </source>
</evidence>
<evidence type="ECO:0000256" key="2">
    <source>
        <dbReference type="SAM" id="MobiDB-lite"/>
    </source>
</evidence>
<evidence type="ECO:0000305" key="3"/>
<keyword id="KW-0007">Acetylation</keyword>
<keyword id="KW-0010">Activator</keyword>
<keyword id="KW-0014">AIDS</keyword>
<keyword id="KW-0025">Alternative splicing</keyword>
<keyword id="KW-0053">Apoptosis</keyword>
<keyword id="KW-1035">Host cytoplasm</keyword>
<keyword id="KW-1048">Host nucleus</keyword>
<keyword id="KW-0945">Host-virus interaction</keyword>
<keyword id="KW-1090">Inhibition of host innate immune response by virus</keyword>
<keyword id="KW-1114">Inhibition of host interferon signaling pathway by virus</keyword>
<keyword id="KW-0922">Interferon antiviral system evasion</keyword>
<keyword id="KW-1017">Isopeptide bond</keyword>
<keyword id="KW-0479">Metal-binding</keyword>
<keyword id="KW-0488">Methylation</keyword>
<keyword id="KW-1122">Modulation of host chromatin by virus</keyword>
<keyword id="KW-1126">Modulation of host PP1 activity by virus</keyword>
<keyword id="KW-0597">Phosphoprotein</keyword>
<keyword id="KW-0694">RNA-binding</keyword>
<keyword id="KW-0964">Secreted</keyword>
<keyword id="KW-0804">Transcription</keyword>
<keyword id="KW-0805">Transcription regulation</keyword>
<keyword id="KW-0832">Ubl conjugation</keyword>
<keyword id="KW-0899">Viral immunoevasion</keyword>
<keyword id="KW-0862">Zinc</keyword>
<sequence length="101" mass="11749">MDPVDPNIEPWNQPGSQPKTACNQCYCKRCCYHCQICFLKKGLGISNGRKKRRPRRTTPYNSENHQDPLRKQPLSQPRGEQTDPKESKKKVESKTKTDQFD</sequence>
<proteinExistence type="inferred from homology"/>
<organism>
    <name type="scientific">Human immunodeficiency virus type 1 group M subtype K (isolate 96CM-MP535)</name>
    <name type="common">HIV-1</name>
    <dbReference type="NCBI Taxonomy" id="388906"/>
    <lineage>
        <taxon>Viruses</taxon>
        <taxon>Riboviria</taxon>
        <taxon>Pararnavirae</taxon>
        <taxon>Artverviricota</taxon>
        <taxon>Revtraviricetes</taxon>
        <taxon>Ortervirales</taxon>
        <taxon>Retroviridae</taxon>
        <taxon>Orthoretrovirinae</taxon>
        <taxon>Lentivirus</taxon>
        <taxon>Human immunodeficiency virus type 1</taxon>
    </lineage>
</organism>
<feature type="chain" id="PRO_0000244848" description="Protein Tat">
    <location>
        <begin position="1"/>
        <end position="101"/>
    </location>
</feature>
<feature type="region of interest" description="Transactivation" evidence="1">
    <location>
        <begin position="1"/>
        <end position="48"/>
    </location>
</feature>
<feature type="region of interest" description="Interaction with human CREBBP" evidence="1">
    <location>
        <begin position="1"/>
        <end position="24"/>
    </location>
</feature>
<feature type="region of interest" description="Disordered" evidence="2">
    <location>
        <begin position="1"/>
        <end position="20"/>
    </location>
</feature>
<feature type="region of interest" description="Cysteine-rich" evidence="1">
    <location>
        <begin position="22"/>
        <end position="37"/>
    </location>
</feature>
<feature type="region of interest" description="Core" evidence="1">
    <location>
        <begin position="38"/>
        <end position="48"/>
    </location>
</feature>
<feature type="region of interest" description="Disordered" evidence="2">
    <location>
        <begin position="45"/>
        <end position="101"/>
    </location>
</feature>
<feature type="region of interest" description="Interaction with the host capping enzyme RNGTT" evidence="1">
    <location>
        <begin position="49"/>
        <end position="86"/>
    </location>
</feature>
<feature type="short sequence motif" description="Nuclear localization signal, RNA-binding (TAR), and protein transduction" evidence="1">
    <location>
        <begin position="49"/>
        <end position="57"/>
    </location>
</feature>
<feature type="compositionally biased region" description="Basic and acidic residues" evidence="2">
    <location>
        <begin position="80"/>
        <end position="101"/>
    </location>
</feature>
<feature type="binding site" evidence="1">
    <location>
        <position position="22"/>
    </location>
    <ligand>
        <name>Zn(2+)</name>
        <dbReference type="ChEBI" id="CHEBI:29105"/>
        <label>1</label>
    </ligand>
</feature>
<feature type="binding site" evidence="1">
    <location>
        <position position="25"/>
    </location>
    <ligand>
        <name>Zn(2+)</name>
        <dbReference type="ChEBI" id="CHEBI:29105"/>
        <label>2</label>
    </ligand>
</feature>
<feature type="binding site" evidence="1">
    <location>
        <position position="27"/>
    </location>
    <ligand>
        <name>Zn(2+)</name>
        <dbReference type="ChEBI" id="CHEBI:29105"/>
        <label>2</label>
    </ligand>
</feature>
<feature type="binding site" evidence="1">
    <location>
        <position position="30"/>
    </location>
    <ligand>
        <name>Zn(2+)</name>
        <dbReference type="ChEBI" id="CHEBI:29105"/>
        <label>2</label>
    </ligand>
</feature>
<feature type="binding site" evidence="1">
    <location>
        <position position="33"/>
    </location>
    <ligand>
        <name>Zn(2+)</name>
        <dbReference type="ChEBI" id="CHEBI:29105"/>
        <label>1</label>
    </ligand>
</feature>
<feature type="binding site" evidence="1">
    <location>
        <position position="34"/>
    </location>
    <ligand>
        <name>Zn(2+)</name>
        <dbReference type="ChEBI" id="CHEBI:29105"/>
        <label>1</label>
    </ligand>
</feature>
<feature type="binding site" evidence="1">
    <location>
        <position position="37"/>
    </location>
    <ligand>
        <name>Zn(2+)</name>
        <dbReference type="ChEBI" id="CHEBI:29105"/>
        <label>1</label>
    </ligand>
</feature>
<feature type="site" description="Essential for Tat translocation through the endosomal membrane" evidence="1">
    <location>
        <position position="11"/>
    </location>
</feature>
<feature type="modified residue" description="N6-acetyllysine; by host PCAF" evidence="1">
    <location>
        <position position="28"/>
    </location>
</feature>
<feature type="modified residue" description="N6-acetyllysine; by host EP300 and GCN5L2" evidence="1">
    <location>
        <position position="50"/>
    </location>
</feature>
<feature type="modified residue" description="N6-acetyllysine; by host EP300 and GCN5L2" evidence="1">
    <location>
        <position position="51"/>
    </location>
</feature>
<feature type="modified residue" description="Asymmetric dimethylarginine; by host PRMT6" evidence="1">
    <location>
        <position position="52"/>
    </location>
</feature>
<feature type="modified residue" description="Asymmetric dimethylarginine; by host PRMT6" evidence="1">
    <location>
        <position position="53"/>
    </location>
</feature>
<feature type="cross-link" description="Glycyl lysine isopeptide (Lys-Gly) (interchain with G-Cter in ubiquitin)" evidence="1">
    <location>
        <position position="71"/>
    </location>
</feature>
<feature type="splice variant" id="VSP_022403" description="In isoform Short.">
    <location>
        <begin position="73"/>
        <end position="101"/>
    </location>
</feature>
<accession>P0C1K4</accession>
<dbReference type="EMBL" id="AJ249239">
    <property type="status" value="NOT_ANNOTATED_CDS"/>
    <property type="molecule type" value="Genomic_RNA"/>
</dbReference>
<dbReference type="SMR" id="P0C1K4"/>
<dbReference type="Proteomes" id="UP000101651">
    <property type="component" value="Segment"/>
</dbReference>
<dbReference type="GO" id="GO:0005576">
    <property type="term" value="C:extracellular region"/>
    <property type="evidence" value="ECO:0007669"/>
    <property type="project" value="UniProtKB-SubCell"/>
</dbReference>
<dbReference type="GO" id="GO:0030430">
    <property type="term" value="C:host cell cytoplasm"/>
    <property type="evidence" value="ECO:0007669"/>
    <property type="project" value="UniProtKB-SubCell"/>
</dbReference>
<dbReference type="GO" id="GO:0044196">
    <property type="term" value="C:host cell nucleolus"/>
    <property type="evidence" value="ECO:0007669"/>
    <property type="project" value="UniProtKB-SubCell"/>
</dbReference>
<dbReference type="GO" id="GO:0042805">
    <property type="term" value="F:actinin binding"/>
    <property type="evidence" value="ECO:0007669"/>
    <property type="project" value="UniProtKB-UniRule"/>
</dbReference>
<dbReference type="GO" id="GO:0030332">
    <property type="term" value="F:cyclin binding"/>
    <property type="evidence" value="ECO:0007669"/>
    <property type="project" value="UniProtKB-UniRule"/>
</dbReference>
<dbReference type="GO" id="GO:0046872">
    <property type="term" value="F:metal ion binding"/>
    <property type="evidence" value="ECO:0007669"/>
    <property type="project" value="UniProtKB-UniRule"/>
</dbReference>
<dbReference type="GO" id="GO:0019904">
    <property type="term" value="F:protein domain specific binding"/>
    <property type="evidence" value="ECO:0007669"/>
    <property type="project" value="UniProtKB-UniRule"/>
</dbReference>
<dbReference type="GO" id="GO:0004865">
    <property type="term" value="F:protein serine/threonine phosphatase inhibitor activity"/>
    <property type="evidence" value="ECO:0007669"/>
    <property type="project" value="UniProtKB-KW"/>
</dbReference>
<dbReference type="GO" id="GO:0001070">
    <property type="term" value="F:RNA-binding transcription regulator activity"/>
    <property type="evidence" value="ECO:0007669"/>
    <property type="project" value="UniProtKB-UniRule"/>
</dbReference>
<dbReference type="GO" id="GO:1990970">
    <property type="term" value="F:trans-activation response element binding"/>
    <property type="evidence" value="ECO:0007669"/>
    <property type="project" value="UniProtKB-UniRule"/>
</dbReference>
<dbReference type="GO" id="GO:0006351">
    <property type="term" value="P:DNA-templated transcription"/>
    <property type="evidence" value="ECO:0007669"/>
    <property type="project" value="UniProtKB-UniRule"/>
</dbReference>
<dbReference type="GO" id="GO:0032968">
    <property type="term" value="P:positive regulation of transcription elongation by RNA polymerase II"/>
    <property type="evidence" value="ECO:0007669"/>
    <property type="project" value="UniProtKB-UniRule"/>
</dbReference>
<dbReference type="GO" id="GO:0050434">
    <property type="term" value="P:positive regulation of viral transcription"/>
    <property type="evidence" value="ECO:0007669"/>
    <property type="project" value="UniProtKB-UniRule"/>
</dbReference>
<dbReference type="GO" id="GO:0039525">
    <property type="term" value="P:symbiont-mediated perturbation of host chromatin organization"/>
    <property type="evidence" value="ECO:0007669"/>
    <property type="project" value="UniProtKB-UniRule"/>
</dbReference>
<dbReference type="GO" id="GO:0052170">
    <property type="term" value="P:symbiont-mediated suppression of host innate immune response"/>
    <property type="evidence" value="ECO:0007669"/>
    <property type="project" value="UniProtKB-KW"/>
</dbReference>
<dbReference type="GO" id="GO:0039606">
    <property type="term" value="P:symbiont-mediated suppression of host translation initiation"/>
    <property type="evidence" value="ECO:0007669"/>
    <property type="project" value="UniProtKB-KW"/>
</dbReference>
<dbReference type="GO" id="GO:0039502">
    <property type="term" value="P:symbiont-mediated suppression of host type I interferon-mediated signaling pathway"/>
    <property type="evidence" value="ECO:0007669"/>
    <property type="project" value="UniProtKB-UniRule"/>
</dbReference>
<dbReference type="Gene3D" id="4.10.20.10">
    <property type="entry name" value="Tat domain"/>
    <property type="match status" value="1"/>
</dbReference>
<dbReference type="HAMAP" id="MF_04079">
    <property type="entry name" value="HIV_TAT"/>
    <property type="match status" value="1"/>
</dbReference>
<dbReference type="InterPro" id="IPR001831">
    <property type="entry name" value="IV_Tat"/>
</dbReference>
<dbReference type="InterPro" id="IPR036963">
    <property type="entry name" value="Tat_dom_sf"/>
</dbReference>
<dbReference type="Pfam" id="PF00539">
    <property type="entry name" value="Tat"/>
    <property type="match status" value="1"/>
</dbReference>
<dbReference type="PRINTS" id="PR00055">
    <property type="entry name" value="HIVTATDOMAIN"/>
</dbReference>
<reference key="1">
    <citation type="journal article" date="2000" name="AIDS Res. Hum. Retroviruses">
        <title>Near-full-length genome sequencing of divergent African HIV type 1 subtype F viruses leads to the identification of a new HIV type 1 subtype designated K.</title>
        <authorList>
            <person name="Triques K."/>
            <person name="Bourgeois A."/>
            <person name="Vidale N."/>
            <person name="Mpoudi-Ngole E."/>
            <person name="Mulanga-Kabeya C."/>
            <person name="Nzilambi N."/>
            <person name="Torimiro N."/>
            <person name="Saman E."/>
            <person name="Delaporte E."/>
            <person name="Peeters M."/>
        </authorList>
    </citation>
    <scope>NUCLEOTIDE SEQUENCE [GENOMIC RNA]</scope>
</reference>
<reference key="2">
    <citation type="journal article" date="2005" name="Microbes Infect.">
        <title>Decoding Tat: the biology of HIV Tat posttranslational modifications.</title>
        <authorList>
            <person name="Hetzer C."/>
            <person name="Dormeyer W."/>
            <person name="Schnolzer M."/>
            <person name="Ott M."/>
        </authorList>
    </citation>
    <scope>REVIEW</scope>
    <scope>ALTERNATIVE SPLICING</scope>
</reference>
<reference key="3">
    <citation type="journal article" date="2006" name="Front. Biosci.">
        <title>The multiple functions of HIV-1 Tat: proliferation versus apoptosis.</title>
        <authorList>
            <person name="Peruzzi F."/>
        </authorList>
    </citation>
    <scope>REVIEW</scope>
</reference>
<reference key="4">
    <citation type="journal article" date="2006" name="Microbes Infect.">
        <title>HIV tat and neurotoxicity.</title>
        <authorList>
            <person name="King J.E."/>
            <person name="Eugenin E.A."/>
            <person name="Buckner C.M."/>
            <person name="Berman J.W."/>
        </authorList>
    </citation>
    <scope>REVIEW</scope>
</reference>
<comment type="function">
    <text evidence="1">Transcriptional activator that increases RNA Pol II processivity, thereby increasing the level of full-length viral transcripts. Recognizes a hairpin structure at the 5'-LTR of the nascent viral mRNAs referred to as the transactivation responsive RNA element (TAR) and recruits the cyclin T1-CDK9 complex (P-TEFb complex) that will in turn hyperphosphorylate the RNA polymerase II to allow efficient elongation. The CDK9 component of P-TEFb and other Tat-activated kinases hyperphosphorylate the C-terminus of RNA Pol II that becomes stabilized and much more processive. Other factors such as HTATSF1/Tat-SF1, SUPT5H/SPT5, and HTATIP2 are also important for Tat's function. Besides its effect on RNA Pol II processivity, Tat induces chromatin remodeling of proviral genes by recruiting the histone acetyltransferases (HATs) CREBBP, EP300 and PCAF to the chromatin. This also contributes to the increase in proviral transcription rate, especially when the provirus integrates in transcriptionally silent region of the host genome. To ensure maximal activation of the LTR, Tat mediates nuclear translocation of NF-kappa-B by interacting with host RELA. Through its interaction with host TBP, Tat may also modulate transcription initiation. Tat can reactivate a latently infected cell by penetrating in it and transactivating its LTR promoter. In the cytoplasm, Tat is thought to act as a translational activator of HIV-1 mRNAs.</text>
</comment>
<comment type="function">
    <text evidence="1">Extracellular circulating Tat can be endocytosed by surrounding uninfected cells via the binding to several surface receptors such as CD26, CXCR4, heparan sulfate proteoglycans (HSPG) or LDLR. Neurons are rarely infected, but they internalize Tat via their LDLR. Through its interaction with nuclear HATs, Tat is potentially able to control the acetylation-dependent cellular gene expression. Modulates the expression of many cellular genes involved in cell survival, proliferation or in coding for cytokines or cytokine receptors. Tat plays a role in T-cell and neurons apoptosis. Tat induced neurotoxicity and apoptosis probably contribute to neuroAIDS. Circulating Tat also acts as a chemokine-like and/or growth factor-like molecule that binds to specific receptors on the surface of the cells, affecting many cellular pathways. In the vascular system, Tat binds to ITGAV/ITGB3 and ITGA5/ITGB1 integrins dimers at the surface of endothelial cells and competes with bFGF for heparin-binding sites, leading to an excess of soluble bFGF.</text>
</comment>
<comment type="subunit">
    <text evidence="1">Interacts with host CCNT1. Associates with the P-TEFb complex composed at least of Tat, P-TEFb (CDK9 and CCNT1), TAR RNA, RNA Pol II. Recruits the HATs CREBBP, TAF1/TFIID, EP300, PCAF and GCN5L2. Interacts with host KAT5/Tip60; this interaction targets the latter to degradation. Interacts with the host deacetylase SIRT1. Interacts with host capping enzyme RNGTT; this interaction stimulates RNGTT. Binds to host KDR, and to the host integrins ITGAV/ITGB3 and ITGA5/ITGB1. Interacts with host KPNB1/importin beta-1 without previous binding to KPNA1/importin alpha-1. Interacts with EIF2AK2. Interacts with host nucleosome assembly protein NAP1L1; this interaction may be required for the transport of Tat within the nucleus, since the two proteins interact at the nuclear rim. Interacts with host C1QBP/SF2P32; this interaction involves lysine-acetylated Tat. Interacts with the host chemokine receptors CCR2, CCR3 and CXCR4. Interacts with host DPP4/CD26; this interaction may trigger an anti-proliferative effect. Interacts with host LDLR. Interacts with the host extracellular matrix metalloproteinase MMP1. Interacts with host PRMT6; this interaction mediates Tat's methylation. Interacts with, and is ubiquitinated by MDM2/Hdm2. Interacts with host PSMC3 and HTATIP2. Interacts with STAB1; this interaction may overcome SATB1-mediated repression of IL2 and IL2RA (interleukin) in T cells by binding to the same domain than HDAC1. Interacts (when acetylated) with human CDK13, thereby increasing HIV-1 mRNA splicing and promoting the production of the doubly spliced HIV-1 protein Nef. Interacts with host TBP; this interaction modulates the activity of transcriptional pre-initiation complex. Interacts with host RELA. Interacts with host PLSCR1; this interaction negatively regulates Tat transactivation activity by altering its subcellular distribution.</text>
</comment>
<comment type="subcellular location">
    <subcellularLocation>
        <location evidence="1">Host nucleus</location>
        <location evidence="1">Host nucleolus</location>
    </subcellularLocation>
    <subcellularLocation>
        <location evidence="1">Host cytoplasm</location>
    </subcellularLocation>
    <subcellularLocation>
        <location evidence="1">Secreted</location>
    </subcellularLocation>
    <text evidence="1">Probably localizes to both nuclear and nucleolar compartments. Nuclear localization is mediated through the interaction of the nuclear localization signal with importin KPNB1. Secretion occurs through a Golgi-independent pathway. Tat is released from infected cells to the extracellular space where it remains associated to the cell membrane, or is secreted into the cerebrospinal fluid and sera. Extracellular Tat can be endocytosed by surrounding uninfected cells via binding to several receptors depending on the cell type.</text>
</comment>
<comment type="alternative products">
    <event type="alternative splicing"/>
    <isoform>
        <id>P0C1K4-1</id>
        <name>Long</name>
        <sequence type="displayed"/>
    </isoform>
    <isoform>
        <id>P0C1K4-2</id>
        <name>Short</name>
        <sequence type="described" ref="VSP_022403"/>
    </isoform>
</comment>
<comment type="domain">
    <text evidence="1">The cell attachment site mediates the interaction with ITGAV/ITGB3 and ITGA5/ITGB1 integrins, leading to vascular cell migration and invasion. This interaction also provides endothelial cells with the adhesion signal they require to grow in response to mitogens.</text>
</comment>
<comment type="domain">
    <text evidence="1">The Cys-rich region may bind 2 zinc ions. This region is involved in binding to KAT5.</text>
</comment>
<comment type="domain">
    <text evidence="1">The transactivation domain mediates the interaction with CCNT1, GCN5L2, and MDM2.</text>
</comment>
<comment type="domain">
    <text evidence="1">The Arg-rich RNA-binding region binds the TAR RNA. This region also mediates the nuclear localization through direct binding to KPNB1 and is involved in Tat's transfer across cell membranes (protein transduction). The same region is required for the interaction with EP300, PCAF, EIF2AK2 and KDR.</text>
</comment>
<comment type="PTM">
    <text evidence="1">Asymmetrical arginine methylation by host PRMT6 seems to diminish the transactivation capacity of Tat and affects the interaction with host CCNT1.</text>
</comment>
<comment type="PTM">
    <text evidence="1">Acetylation by EP300, CREBBP, GCN5L2/GCN5 and PCAF regulates the transactivation activity of Tat. EP300-mediated acetylation of Lys-50 promotes dissociation of Tat from the TAR RNA through the competitive binding to PCAF's bromodomain. In addition, the non-acetylated Tat's N-terminus can also interact with PCAF. PCAF-mediated acetylation of Lys-28 enhances Tat's binding to CCNT1. Lys-50 is deacetylated by SIRT1.</text>
</comment>
<comment type="PTM">
    <text evidence="1">Polyubiquitination by host MDM2 does not target Tat to degradation, but activates its transactivation function and fosters interaction with CCNT1 and TAR RNA.</text>
</comment>
<comment type="PTM">
    <text evidence="1">Phosphorylated by EIF2AK2 on serine and threonine residues adjacent to the basic region important for TAR RNA binding and function. Phosphorylation of Tat by EIF2AK2 is dependent on the prior activation of EIF2AK2 by dsRNA.</text>
</comment>
<comment type="miscellaneous">
    <text evidence="1">HIV-1 lineages are divided in three main groups, M (for Major), O (for Outlier), and N (for New, or Non-M, Non-O). The vast majority of strains found worldwide belong to the group M. Group O seems to be endemic to and largely confined to Cameroon and neighboring countries in West Central Africa, where these viruses represent a small minority of HIV-1 strains. The group N is represented by a limited number of isolates from Cameroonian persons. The group M is further subdivided in 9 clades or subtypes (A to D, F to H, J and K).</text>
</comment>
<comment type="miscellaneous">
    <molecule>Isoform Short</molecule>
    <text evidence="3">Expressed in the late stage of the infection cycle, when unspliced viral RNAs are exported to the cytoplasm by the viral Rev protein.</text>
</comment>
<comment type="similarity">
    <text evidence="1">Belongs to the lentiviruses Tat family.</text>
</comment>
<gene>
    <name evidence="1" type="primary">tat</name>
</gene>
<name>TAT_HV196</name>
<protein>
    <recommendedName>
        <fullName evidence="1">Protein Tat</fullName>
    </recommendedName>
    <alternativeName>
        <fullName evidence="1">Transactivating regulatory protein</fullName>
    </alternativeName>
</protein>